<keyword id="KW-0963">Cytoplasm</keyword>
<keyword id="KW-0597">Phosphoprotein</keyword>
<keyword id="KW-1185">Reference proteome</keyword>
<evidence type="ECO:0000250" key="1"/>
<evidence type="ECO:0000255" key="2">
    <source>
        <dbReference type="HAMAP-Rule" id="MF_00973"/>
    </source>
</evidence>
<evidence type="ECO:0000256" key="3">
    <source>
        <dbReference type="SAM" id="MobiDB-lite"/>
    </source>
</evidence>
<sequence length="342" mass="35823">MTDGIVALGGGHGLYATLSAARRLTPYVTAVVTVADDGGSSGRLRSELDVVPPGDLRMALAALASDSPHGRLWATILQHRFGGSGALAGHPIGNLMLAGLSEVLADPVAALDELGRILGVKGRVLPMCPVALQIEADVSGLEADPRMFRLIRGQVAIATTPGKVRRVRLLPTDPPATRQAVDAIMAADLVVLGPGSWFTSVIPHVLVPGLAAALRATSARRALVLNLVAEPGETAGFSVERHLHVLAQHAPGFTVHDIIIDAERVPSEREREQLRRTATMLQAEVHFADVARPGTPLHDPGKLAAVLDGVCARDVGASEPPVAATQEIPIDGGRPRGDDAWR</sequence>
<feature type="chain" id="PRO_0000427241" description="Putative gluconeogenesis factor">
    <location>
        <begin position="1"/>
        <end position="342"/>
    </location>
</feature>
<feature type="region of interest" description="Disordered" evidence="3">
    <location>
        <begin position="318"/>
        <end position="342"/>
    </location>
</feature>
<feature type="compositionally biased region" description="Basic and acidic residues" evidence="3">
    <location>
        <begin position="333"/>
        <end position="342"/>
    </location>
</feature>
<feature type="modified residue" description="Phosphothreonine" evidence="1">
    <location>
        <position position="325"/>
    </location>
</feature>
<name>GNGF_MYCTO</name>
<organism>
    <name type="scientific">Mycobacterium tuberculosis (strain CDC 1551 / Oshkosh)</name>
    <dbReference type="NCBI Taxonomy" id="83331"/>
    <lineage>
        <taxon>Bacteria</taxon>
        <taxon>Bacillati</taxon>
        <taxon>Actinomycetota</taxon>
        <taxon>Actinomycetes</taxon>
        <taxon>Mycobacteriales</taxon>
        <taxon>Mycobacteriaceae</taxon>
        <taxon>Mycobacterium</taxon>
        <taxon>Mycobacterium tuberculosis complex</taxon>
    </lineage>
</organism>
<protein>
    <recommendedName>
        <fullName evidence="2">Putative gluconeogenesis factor</fullName>
    </recommendedName>
</protein>
<reference key="1">
    <citation type="journal article" date="2002" name="J. Bacteriol.">
        <title>Whole-genome comparison of Mycobacterium tuberculosis clinical and laboratory strains.</title>
        <authorList>
            <person name="Fleischmann R.D."/>
            <person name="Alland D."/>
            <person name="Eisen J.A."/>
            <person name="Carpenter L."/>
            <person name="White O."/>
            <person name="Peterson J.D."/>
            <person name="DeBoy R.T."/>
            <person name="Dodson R.J."/>
            <person name="Gwinn M.L."/>
            <person name="Haft D.H."/>
            <person name="Hickey E.K."/>
            <person name="Kolonay J.F."/>
            <person name="Nelson W.C."/>
            <person name="Umayam L.A."/>
            <person name="Ermolaeva M.D."/>
            <person name="Salzberg S.L."/>
            <person name="Delcher A."/>
            <person name="Utterback T.R."/>
            <person name="Weidman J.F."/>
            <person name="Khouri H.M."/>
            <person name="Gill J."/>
            <person name="Mikula A."/>
            <person name="Bishai W."/>
            <person name="Jacobs W.R. Jr."/>
            <person name="Venter J.C."/>
            <person name="Fraser C.M."/>
        </authorList>
    </citation>
    <scope>NUCLEOTIDE SEQUENCE [LARGE SCALE GENOMIC DNA]</scope>
    <source>
        <strain>CDC 1551 / Oshkosh</strain>
    </source>
</reference>
<proteinExistence type="inferred from homology"/>
<comment type="function">
    <text evidence="2">Required for morphogenesis under gluconeogenic growth conditions.</text>
</comment>
<comment type="subcellular location">
    <subcellularLocation>
        <location evidence="2">Cytoplasm</location>
    </subcellularLocation>
</comment>
<comment type="PTM">
    <text evidence="1">Phosphorylated by PknA and/or PknB.</text>
</comment>
<comment type="similarity">
    <text evidence="2">Belongs to the gluconeogenesis factor family.</text>
</comment>
<gene>
    <name type="ordered locus">MT1465</name>
</gene>
<dbReference type="EMBL" id="AE000516">
    <property type="protein sequence ID" value="AAK45730.1"/>
    <property type="molecule type" value="Genomic_DNA"/>
</dbReference>
<dbReference type="PIR" id="C70903">
    <property type="entry name" value="C70903"/>
</dbReference>
<dbReference type="SMR" id="P9WMU4"/>
<dbReference type="KEGG" id="mtc:MT1465"/>
<dbReference type="PATRIC" id="fig|83331.31.peg.1574"/>
<dbReference type="HOGENOM" id="CLU_044041_1_0_11"/>
<dbReference type="Proteomes" id="UP000001020">
    <property type="component" value="Chromosome"/>
</dbReference>
<dbReference type="GO" id="GO:0005737">
    <property type="term" value="C:cytoplasm"/>
    <property type="evidence" value="ECO:0007669"/>
    <property type="project" value="UniProtKB-SubCell"/>
</dbReference>
<dbReference type="GO" id="GO:0043743">
    <property type="term" value="F:LPPG:FO 2-phospho-L-lactate transferase activity"/>
    <property type="evidence" value="ECO:0007669"/>
    <property type="project" value="InterPro"/>
</dbReference>
<dbReference type="GO" id="GO:0008360">
    <property type="term" value="P:regulation of cell shape"/>
    <property type="evidence" value="ECO:0007669"/>
    <property type="project" value="UniProtKB-UniRule"/>
</dbReference>
<dbReference type="CDD" id="cd07187">
    <property type="entry name" value="YvcK_like"/>
    <property type="match status" value="1"/>
</dbReference>
<dbReference type="Gene3D" id="3.40.50.10680">
    <property type="entry name" value="CofD-like domains"/>
    <property type="match status" value="1"/>
</dbReference>
<dbReference type="HAMAP" id="MF_00973">
    <property type="entry name" value="Gluconeogen_factor"/>
    <property type="match status" value="1"/>
</dbReference>
<dbReference type="InterPro" id="IPR002882">
    <property type="entry name" value="CofD"/>
</dbReference>
<dbReference type="InterPro" id="IPR038136">
    <property type="entry name" value="CofD-like_dom_sf"/>
</dbReference>
<dbReference type="InterPro" id="IPR010119">
    <property type="entry name" value="Gluconeogen_factor"/>
</dbReference>
<dbReference type="NCBIfam" id="TIGR01826">
    <property type="entry name" value="CofD_related"/>
    <property type="match status" value="1"/>
</dbReference>
<dbReference type="PANTHER" id="PTHR30135:SF3">
    <property type="entry name" value="GLUCONEOGENESIS FACTOR-RELATED"/>
    <property type="match status" value="1"/>
</dbReference>
<dbReference type="PANTHER" id="PTHR30135">
    <property type="entry name" value="UNCHARACTERIZED PROTEIN YVCK-RELATED"/>
    <property type="match status" value="1"/>
</dbReference>
<dbReference type="Pfam" id="PF01933">
    <property type="entry name" value="CofD"/>
    <property type="match status" value="1"/>
</dbReference>
<dbReference type="SUPFAM" id="SSF142338">
    <property type="entry name" value="CofD-like"/>
    <property type="match status" value="1"/>
</dbReference>
<accession>P9WMU4</accession>
<accession>L0T6L6</accession>
<accession>P71691</accession>